<name>TRMD_THESQ</name>
<keyword id="KW-0963">Cytoplasm</keyword>
<keyword id="KW-0489">Methyltransferase</keyword>
<keyword id="KW-0949">S-adenosyl-L-methionine</keyword>
<keyword id="KW-0808">Transferase</keyword>
<keyword id="KW-0819">tRNA processing</keyword>
<reference key="1">
    <citation type="journal article" date="2011" name="J. Bacteriol.">
        <title>Genome sequence of Thermotoga sp. strain RQ2, a hyperthermophilic bacterium isolated from a geothermally heated region of the seafloor near Ribeira Quente, the Azores.</title>
        <authorList>
            <person name="Swithers K.S."/>
            <person name="DiPippo J.L."/>
            <person name="Bruce D.C."/>
            <person name="Detter C."/>
            <person name="Tapia R."/>
            <person name="Han S."/>
            <person name="Saunders E."/>
            <person name="Goodwin L.A."/>
            <person name="Han J."/>
            <person name="Woyke T."/>
            <person name="Pitluck S."/>
            <person name="Pennacchio L."/>
            <person name="Nolan M."/>
            <person name="Mikhailova N."/>
            <person name="Lykidis A."/>
            <person name="Land M.L."/>
            <person name="Brettin T."/>
            <person name="Stetter K.O."/>
            <person name="Nelson K.E."/>
            <person name="Gogarten J.P."/>
            <person name="Noll K.M."/>
        </authorList>
    </citation>
    <scope>NUCLEOTIDE SEQUENCE [LARGE SCALE GENOMIC DNA]</scope>
    <source>
        <strain>RQ2</strain>
    </source>
</reference>
<sequence length="245" mass="28493">MRITIVTIFPEMVEVIKKYGVIARAVERGIVEINVENLRDYTTDRHRTVDDYQYGGGYGMVMKPEPFFRFYESYVEKYGKPYVILTSPQGRIFNYKIAEELSKKDDIVIFCGRYEGIDERVMSIVDDEISIGDYILTGGELPAMVITDAVVRLVPGVVERESVERESFHQGLLDHPVYTRPYEYKGMKVPDVLLSGDHEKVELWRRKESIKKTLAKRPDLFLAKELDEMDKLAIIELFRELMEKC</sequence>
<evidence type="ECO:0000255" key="1">
    <source>
        <dbReference type="HAMAP-Rule" id="MF_00605"/>
    </source>
</evidence>
<organism>
    <name type="scientific">Thermotoga sp. (strain RQ2)</name>
    <dbReference type="NCBI Taxonomy" id="126740"/>
    <lineage>
        <taxon>Bacteria</taxon>
        <taxon>Thermotogati</taxon>
        <taxon>Thermotogota</taxon>
        <taxon>Thermotogae</taxon>
        <taxon>Thermotogales</taxon>
        <taxon>Thermotogaceae</taxon>
        <taxon>Thermotoga</taxon>
    </lineage>
</organism>
<dbReference type="EC" id="2.1.1.228" evidence="1"/>
<dbReference type="EMBL" id="CP000969">
    <property type="protein sequence ID" value="ACB09576.1"/>
    <property type="molecule type" value="Genomic_DNA"/>
</dbReference>
<dbReference type="RefSeq" id="WP_004081985.1">
    <property type="nucleotide sequence ID" value="NC_010483.1"/>
</dbReference>
<dbReference type="SMR" id="B1LB78"/>
<dbReference type="KEGG" id="trq:TRQ2_1232"/>
<dbReference type="HOGENOM" id="CLU_047363_0_1_0"/>
<dbReference type="Proteomes" id="UP000001687">
    <property type="component" value="Chromosome"/>
</dbReference>
<dbReference type="GO" id="GO:0005829">
    <property type="term" value="C:cytosol"/>
    <property type="evidence" value="ECO:0007669"/>
    <property type="project" value="TreeGrafter"/>
</dbReference>
<dbReference type="GO" id="GO:0052906">
    <property type="term" value="F:tRNA (guanine(37)-N1)-methyltransferase activity"/>
    <property type="evidence" value="ECO:0007669"/>
    <property type="project" value="UniProtKB-UniRule"/>
</dbReference>
<dbReference type="GO" id="GO:0002939">
    <property type="term" value="P:tRNA N1-guanine methylation"/>
    <property type="evidence" value="ECO:0007669"/>
    <property type="project" value="TreeGrafter"/>
</dbReference>
<dbReference type="CDD" id="cd18080">
    <property type="entry name" value="TrmD-like"/>
    <property type="match status" value="1"/>
</dbReference>
<dbReference type="FunFam" id="1.10.1270.20:FF:000001">
    <property type="entry name" value="tRNA (guanine-N(1)-)-methyltransferase"/>
    <property type="match status" value="1"/>
</dbReference>
<dbReference type="FunFam" id="3.40.1280.10:FF:000001">
    <property type="entry name" value="tRNA (guanine-N(1)-)-methyltransferase"/>
    <property type="match status" value="1"/>
</dbReference>
<dbReference type="Gene3D" id="3.40.1280.10">
    <property type="match status" value="1"/>
</dbReference>
<dbReference type="Gene3D" id="1.10.1270.20">
    <property type="entry name" value="tRNA(m1g37)methyltransferase, domain 2"/>
    <property type="match status" value="1"/>
</dbReference>
<dbReference type="HAMAP" id="MF_00605">
    <property type="entry name" value="TrmD"/>
    <property type="match status" value="1"/>
</dbReference>
<dbReference type="InterPro" id="IPR029028">
    <property type="entry name" value="Alpha/beta_knot_MTases"/>
</dbReference>
<dbReference type="InterPro" id="IPR023148">
    <property type="entry name" value="tRNA_m1G_MeTrfase_C_sf"/>
</dbReference>
<dbReference type="InterPro" id="IPR002649">
    <property type="entry name" value="tRNA_m1G_MeTrfase_TrmD"/>
</dbReference>
<dbReference type="InterPro" id="IPR029026">
    <property type="entry name" value="tRNA_m1G_MTases_N"/>
</dbReference>
<dbReference type="InterPro" id="IPR016009">
    <property type="entry name" value="tRNA_MeTrfase_TRMD/TRM10"/>
</dbReference>
<dbReference type="NCBIfam" id="NF000648">
    <property type="entry name" value="PRK00026.1"/>
    <property type="match status" value="1"/>
</dbReference>
<dbReference type="NCBIfam" id="TIGR00088">
    <property type="entry name" value="trmD"/>
    <property type="match status" value="1"/>
</dbReference>
<dbReference type="PANTHER" id="PTHR46417">
    <property type="entry name" value="TRNA (GUANINE-N(1)-)-METHYLTRANSFERASE"/>
    <property type="match status" value="1"/>
</dbReference>
<dbReference type="PANTHER" id="PTHR46417:SF1">
    <property type="entry name" value="TRNA (GUANINE-N(1)-)-METHYLTRANSFERASE"/>
    <property type="match status" value="1"/>
</dbReference>
<dbReference type="Pfam" id="PF01746">
    <property type="entry name" value="tRNA_m1G_MT"/>
    <property type="match status" value="1"/>
</dbReference>
<dbReference type="PIRSF" id="PIRSF000386">
    <property type="entry name" value="tRNA_mtase"/>
    <property type="match status" value="1"/>
</dbReference>
<dbReference type="SUPFAM" id="SSF75217">
    <property type="entry name" value="alpha/beta knot"/>
    <property type="match status" value="1"/>
</dbReference>
<gene>
    <name evidence="1" type="primary">trmD</name>
    <name type="ordered locus">TRQ2_1232</name>
</gene>
<feature type="chain" id="PRO_1000130219" description="tRNA (guanine-N(1)-)-methyltransferase">
    <location>
        <begin position="1"/>
        <end position="245"/>
    </location>
</feature>
<feature type="binding site" evidence="1">
    <location>
        <position position="112"/>
    </location>
    <ligand>
        <name>S-adenosyl-L-methionine</name>
        <dbReference type="ChEBI" id="CHEBI:59789"/>
    </ligand>
</feature>
<feature type="binding site" evidence="1">
    <location>
        <begin position="131"/>
        <end position="136"/>
    </location>
    <ligand>
        <name>S-adenosyl-L-methionine</name>
        <dbReference type="ChEBI" id="CHEBI:59789"/>
    </ligand>
</feature>
<comment type="function">
    <text evidence="1">Specifically methylates guanosine-37 in various tRNAs.</text>
</comment>
<comment type="catalytic activity">
    <reaction evidence="1">
        <text>guanosine(37) in tRNA + S-adenosyl-L-methionine = N(1)-methylguanosine(37) in tRNA + S-adenosyl-L-homocysteine + H(+)</text>
        <dbReference type="Rhea" id="RHEA:36899"/>
        <dbReference type="Rhea" id="RHEA-COMP:10145"/>
        <dbReference type="Rhea" id="RHEA-COMP:10147"/>
        <dbReference type="ChEBI" id="CHEBI:15378"/>
        <dbReference type="ChEBI" id="CHEBI:57856"/>
        <dbReference type="ChEBI" id="CHEBI:59789"/>
        <dbReference type="ChEBI" id="CHEBI:73542"/>
        <dbReference type="ChEBI" id="CHEBI:74269"/>
        <dbReference type="EC" id="2.1.1.228"/>
    </reaction>
</comment>
<comment type="subunit">
    <text evidence="1">Homodimer.</text>
</comment>
<comment type="subcellular location">
    <subcellularLocation>
        <location evidence="1">Cytoplasm</location>
    </subcellularLocation>
</comment>
<comment type="similarity">
    <text evidence="1">Belongs to the RNA methyltransferase TrmD family.</text>
</comment>
<protein>
    <recommendedName>
        <fullName evidence="1">tRNA (guanine-N(1)-)-methyltransferase</fullName>
        <ecNumber evidence="1">2.1.1.228</ecNumber>
    </recommendedName>
    <alternativeName>
        <fullName evidence="1">M1G-methyltransferase</fullName>
    </alternativeName>
    <alternativeName>
        <fullName evidence="1">tRNA [GM37] methyltransferase</fullName>
    </alternativeName>
</protein>
<proteinExistence type="inferred from homology"/>
<accession>B1LB78</accession>